<dbReference type="EC" id="3.6.5.n1" evidence="1"/>
<dbReference type="EMBL" id="CP000308">
    <property type="protein sequence ID" value="ABG14415.1"/>
    <property type="molecule type" value="Genomic_DNA"/>
</dbReference>
<dbReference type="RefSeq" id="WP_002209677.1">
    <property type="nucleotide sequence ID" value="NZ_CP009906.1"/>
</dbReference>
<dbReference type="SMR" id="Q1C557"/>
<dbReference type="GeneID" id="57975975"/>
<dbReference type="KEGG" id="ypa:YPA_2450"/>
<dbReference type="Proteomes" id="UP000001971">
    <property type="component" value="Chromosome"/>
</dbReference>
<dbReference type="GO" id="GO:0005886">
    <property type="term" value="C:plasma membrane"/>
    <property type="evidence" value="ECO:0007669"/>
    <property type="project" value="UniProtKB-SubCell"/>
</dbReference>
<dbReference type="GO" id="GO:0005525">
    <property type="term" value="F:GTP binding"/>
    <property type="evidence" value="ECO:0007669"/>
    <property type="project" value="UniProtKB-UniRule"/>
</dbReference>
<dbReference type="GO" id="GO:0003924">
    <property type="term" value="F:GTPase activity"/>
    <property type="evidence" value="ECO:0007669"/>
    <property type="project" value="UniProtKB-UniRule"/>
</dbReference>
<dbReference type="GO" id="GO:0097216">
    <property type="term" value="F:guanosine tetraphosphate binding"/>
    <property type="evidence" value="ECO:0007669"/>
    <property type="project" value="UniProtKB-ARBA"/>
</dbReference>
<dbReference type="GO" id="GO:0043022">
    <property type="term" value="F:ribosome binding"/>
    <property type="evidence" value="ECO:0007669"/>
    <property type="project" value="UniProtKB-UniRule"/>
</dbReference>
<dbReference type="GO" id="GO:0003746">
    <property type="term" value="F:translation elongation factor activity"/>
    <property type="evidence" value="ECO:0007669"/>
    <property type="project" value="UniProtKB-UniRule"/>
</dbReference>
<dbReference type="GO" id="GO:0045727">
    <property type="term" value="P:positive regulation of translation"/>
    <property type="evidence" value="ECO:0007669"/>
    <property type="project" value="UniProtKB-UniRule"/>
</dbReference>
<dbReference type="CDD" id="cd03699">
    <property type="entry name" value="EF4_II"/>
    <property type="match status" value="1"/>
</dbReference>
<dbReference type="CDD" id="cd16260">
    <property type="entry name" value="EF4_III"/>
    <property type="match status" value="1"/>
</dbReference>
<dbReference type="CDD" id="cd01890">
    <property type="entry name" value="LepA"/>
    <property type="match status" value="1"/>
</dbReference>
<dbReference type="CDD" id="cd03709">
    <property type="entry name" value="lepA_C"/>
    <property type="match status" value="1"/>
</dbReference>
<dbReference type="FunFam" id="3.30.70.240:FF:000005">
    <property type="entry name" value="Elongation factor 4"/>
    <property type="match status" value="1"/>
</dbReference>
<dbReference type="FunFam" id="3.40.50.300:FF:000078">
    <property type="entry name" value="Elongation factor 4"/>
    <property type="match status" value="1"/>
</dbReference>
<dbReference type="FunFam" id="2.40.30.10:FF:000015">
    <property type="entry name" value="Translation factor GUF1, mitochondrial"/>
    <property type="match status" value="1"/>
</dbReference>
<dbReference type="FunFam" id="3.30.70.2570:FF:000001">
    <property type="entry name" value="Translation factor GUF1, mitochondrial"/>
    <property type="match status" value="1"/>
</dbReference>
<dbReference type="FunFam" id="3.30.70.870:FF:000004">
    <property type="entry name" value="Translation factor GUF1, mitochondrial"/>
    <property type="match status" value="1"/>
</dbReference>
<dbReference type="Gene3D" id="3.30.70.240">
    <property type="match status" value="1"/>
</dbReference>
<dbReference type="Gene3D" id="3.30.70.2570">
    <property type="entry name" value="Elongation factor 4, C-terminal domain"/>
    <property type="match status" value="1"/>
</dbReference>
<dbReference type="Gene3D" id="3.30.70.870">
    <property type="entry name" value="Elongation Factor G (Translational Gtpase), domain 3"/>
    <property type="match status" value="1"/>
</dbReference>
<dbReference type="Gene3D" id="3.40.50.300">
    <property type="entry name" value="P-loop containing nucleotide triphosphate hydrolases"/>
    <property type="match status" value="1"/>
</dbReference>
<dbReference type="Gene3D" id="2.40.30.10">
    <property type="entry name" value="Translation factors"/>
    <property type="match status" value="1"/>
</dbReference>
<dbReference type="HAMAP" id="MF_00071">
    <property type="entry name" value="LepA"/>
    <property type="match status" value="1"/>
</dbReference>
<dbReference type="InterPro" id="IPR006297">
    <property type="entry name" value="EF-4"/>
</dbReference>
<dbReference type="InterPro" id="IPR035647">
    <property type="entry name" value="EFG_III/V"/>
</dbReference>
<dbReference type="InterPro" id="IPR000640">
    <property type="entry name" value="EFG_V-like"/>
</dbReference>
<dbReference type="InterPro" id="IPR004161">
    <property type="entry name" value="EFTu-like_2"/>
</dbReference>
<dbReference type="InterPro" id="IPR031157">
    <property type="entry name" value="G_TR_CS"/>
</dbReference>
<dbReference type="InterPro" id="IPR038363">
    <property type="entry name" value="LepA_C_sf"/>
</dbReference>
<dbReference type="InterPro" id="IPR013842">
    <property type="entry name" value="LepA_CTD"/>
</dbReference>
<dbReference type="InterPro" id="IPR035654">
    <property type="entry name" value="LepA_IV"/>
</dbReference>
<dbReference type="InterPro" id="IPR027417">
    <property type="entry name" value="P-loop_NTPase"/>
</dbReference>
<dbReference type="InterPro" id="IPR005225">
    <property type="entry name" value="Small_GTP-bd"/>
</dbReference>
<dbReference type="InterPro" id="IPR000795">
    <property type="entry name" value="T_Tr_GTP-bd_dom"/>
</dbReference>
<dbReference type="NCBIfam" id="TIGR01393">
    <property type="entry name" value="lepA"/>
    <property type="match status" value="1"/>
</dbReference>
<dbReference type="NCBIfam" id="TIGR00231">
    <property type="entry name" value="small_GTP"/>
    <property type="match status" value="1"/>
</dbReference>
<dbReference type="PANTHER" id="PTHR43512:SF4">
    <property type="entry name" value="TRANSLATION FACTOR GUF1 HOMOLOG, CHLOROPLASTIC"/>
    <property type="match status" value="1"/>
</dbReference>
<dbReference type="PANTHER" id="PTHR43512">
    <property type="entry name" value="TRANSLATION FACTOR GUF1-RELATED"/>
    <property type="match status" value="1"/>
</dbReference>
<dbReference type="Pfam" id="PF00679">
    <property type="entry name" value="EFG_C"/>
    <property type="match status" value="1"/>
</dbReference>
<dbReference type="Pfam" id="PF00009">
    <property type="entry name" value="GTP_EFTU"/>
    <property type="match status" value="1"/>
</dbReference>
<dbReference type="Pfam" id="PF03144">
    <property type="entry name" value="GTP_EFTU_D2"/>
    <property type="match status" value="1"/>
</dbReference>
<dbReference type="Pfam" id="PF06421">
    <property type="entry name" value="LepA_C"/>
    <property type="match status" value="1"/>
</dbReference>
<dbReference type="PRINTS" id="PR00315">
    <property type="entry name" value="ELONGATNFCT"/>
</dbReference>
<dbReference type="SUPFAM" id="SSF54980">
    <property type="entry name" value="EF-G C-terminal domain-like"/>
    <property type="match status" value="2"/>
</dbReference>
<dbReference type="SUPFAM" id="SSF52540">
    <property type="entry name" value="P-loop containing nucleoside triphosphate hydrolases"/>
    <property type="match status" value="1"/>
</dbReference>
<dbReference type="PROSITE" id="PS00301">
    <property type="entry name" value="G_TR_1"/>
    <property type="match status" value="1"/>
</dbReference>
<dbReference type="PROSITE" id="PS51722">
    <property type="entry name" value="G_TR_2"/>
    <property type="match status" value="1"/>
</dbReference>
<organism>
    <name type="scientific">Yersinia pestis bv. Antiqua (strain Antiqua)</name>
    <dbReference type="NCBI Taxonomy" id="360102"/>
    <lineage>
        <taxon>Bacteria</taxon>
        <taxon>Pseudomonadati</taxon>
        <taxon>Pseudomonadota</taxon>
        <taxon>Gammaproteobacteria</taxon>
        <taxon>Enterobacterales</taxon>
        <taxon>Yersiniaceae</taxon>
        <taxon>Yersinia</taxon>
    </lineage>
</organism>
<evidence type="ECO:0000255" key="1">
    <source>
        <dbReference type="HAMAP-Rule" id="MF_00071"/>
    </source>
</evidence>
<proteinExistence type="inferred from homology"/>
<sequence>MKHIRNFSIIAHIDHGKSTLSDRIIQICGGLSEREMAAQVLDSMDLERERGITIKAQSVTLDYHSKDGQTYQLNFIDTPGHVDFSYEVSRSLAACEGALLVVDAGQGVEAQTLANCYTAMEMDLEVVPVLNKIDLPAADPERVAEEIEDIVGIDATDAIRCSAKTGVGVPDVLERLVRDIPAPEGDPNGPLQALIIDSWFDNYLGVVSLIRIKNGSLRKGDKVKVMSTGQSYNADRLGIFTPKRVDRDVLNCGEVGWLVCAIKDILGAPVGDTLTLTRNPAEKSLPGFKKVKPQVYAGLFPISSDDYESFRDALGKLSLNDASLFYEPESSTALGFGFRCGFLGLLHMEIIQERLEREYDLELITTAPTVVYEVITTNQETVYVDSPSKLPALNNIEELREPIAECHMLLPQEYLGNVITLCIEKRGTQTNMVYHGKQVALTYEIPMAEVVLDFFDRLKSTSRGYASLDYNFKRFQTSDMVRVDVLINNERVDALALITHRDNAQYRGRDLVEKMKELIPRQQFDIAIQAAIGNHIIARSTVKQLRKNVLAKCYGGDVSRKKKLLQKQKDGKKRMKQVGNVELPQEAFLAILHVGKDSK</sequence>
<keyword id="KW-0997">Cell inner membrane</keyword>
<keyword id="KW-1003">Cell membrane</keyword>
<keyword id="KW-0342">GTP-binding</keyword>
<keyword id="KW-0378">Hydrolase</keyword>
<keyword id="KW-0472">Membrane</keyword>
<keyword id="KW-0547">Nucleotide-binding</keyword>
<keyword id="KW-0648">Protein biosynthesis</keyword>
<feature type="chain" id="PRO_0000265726" description="Elongation factor 4">
    <location>
        <begin position="1"/>
        <end position="599"/>
    </location>
</feature>
<feature type="domain" description="tr-type G">
    <location>
        <begin position="2"/>
        <end position="184"/>
    </location>
</feature>
<feature type="binding site" evidence="1">
    <location>
        <begin position="14"/>
        <end position="19"/>
    </location>
    <ligand>
        <name>GTP</name>
        <dbReference type="ChEBI" id="CHEBI:37565"/>
    </ligand>
</feature>
<feature type="binding site" evidence="1">
    <location>
        <begin position="131"/>
        <end position="134"/>
    </location>
    <ligand>
        <name>GTP</name>
        <dbReference type="ChEBI" id="CHEBI:37565"/>
    </ligand>
</feature>
<comment type="function">
    <text evidence="1">Required for accurate and efficient protein synthesis under certain stress conditions. May act as a fidelity factor of the translation reaction, by catalyzing a one-codon backward translocation of tRNAs on improperly translocated ribosomes. Back-translocation proceeds from a post-translocation (POST) complex to a pre-translocation (PRE) complex, thus giving elongation factor G a second chance to translocate the tRNAs correctly. Binds to ribosomes in a GTP-dependent manner.</text>
</comment>
<comment type="catalytic activity">
    <reaction evidence="1">
        <text>GTP + H2O = GDP + phosphate + H(+)</text>
        <dbReference type="Rhea" id="RHEA:19669"/>
        <dbReference type="ChEBI" id="CHEBI:15377"/>
        <dbReference type="ChEBI" id="CHEBI:15378"/>
        <dbReference type="ChEBI" id="CHEBI:37565"/>
        <dbReference type="ChEBI" id="CHEBI:43474"/>
        <dbReference type="ChEBI" id="CHEBI:58189"/>
        <dbReference type="EC" id="3.6.5.n1"/>
    </reaction>
</comment>
<comment type="subcellular location">
    <subcellularLocation>
        <location evidence="1">Cell inner membrane</location>
        <topology evidence="1">Peripheral membrane protein</topology>
        <orientation evidence="1">Cytoplasmic side</orientation>
    </subcellularLocation>
</comment>
<comment type="similarity">
    <text evidence="1">Belongs to the TRAFAC class translation factor GTPase superfamily. Classic translation factor GTPase family. LepA subfamily.</text>
</comment>
<accession>Q1C557</accession>
<gene>
    <name evidence="1" type="primary">lepA</name>
    <name type="ordered locus">YPA_2450</name>
</gene>
<name>LEPA_YERPA</name>
<reference key="1">
    <citation type="journal article" date="2006" name="J. Bacteriol.">
        <title>Complete genome sequence of Yersinia pestis strains Antiqua and Nepal516: evidence of gene reduction in an emerging pathogen.</title>
        <authorList>
            <person name="Chain P.S.G."/>
            <person name="Hu P."/>
            <person name="Malfatti S.A."/>
            <person name="Radnedge L."/>
            <person name="Larimer F."/>
            <person name="Vergez L.M."/>
            <person name="Worsham P."/>
            <person name="Chu M.C."/>
            <person name="Andersen G.L."/>
        </authorList>
    </citation>
    <scope>NUCLEOTIDE SEQUENCE [LARGE SCALE GENOMIC DNA]</scope>
    <source>
        <strain>Antiqua</strain>
    </source>
</reference>
<protein>
    <recommendedName>
        <fullName evidence="1">Elongation factor 4</fullName>
        <shortName evidence="1">EF-4</shortName>
        <ecNumber evidence="1">3.6.5.n1</ecNumber>
    </recommendedName>
    <alternativeName>
        <fullName evidence="1">Ribosomal back-translocase LepA</fullName>
    </alternativeName>
</protein>